<keyword id="KW-0998">Cell outer membrane</keyword>
<keyword id="KW-0449">Lipoprotein</keyword>
<keyword id="KW-0472">Membrane</keyword>
<keyword id="KW-0564">Palmitate</keyword>
<keyword id="KW-1185">Reference proteome</keyword>
<keyword id="KW-0732">Signal</keyword>
<sequence>MRLLPLFLMVTLAASGCGIVESKKIDYKSSNKLPTLEIPPDLVAPTADNRYAIPDTEGSGTATLSTYSAERKAAPSGTPSLLPAQDKARIERAGTQRWLVVQATPQQVWPVIKDFWQENGFIVNLESPETGVIETDWAENRAKIPQDVIRRTLGKVLDGLYSTAERDKFRTRIEAGSGGTEIYLSHRGMMEVYATEGKDKTVWQPRPADPELEAEMLRRLMLRFGVEENRAQTLLTAKQTPDQARVIRDAGGSLLEMDEGFDRAWRRVGLALDRVGFAVEDRDRSKGTYFVRYIDPDADNASKRDEGMFAKLAFWRSKKDQASPQLQIVVDEAGEGKSRVRVAGGEGRAADAATQNRIINLLHKELK</sequence>
<proteinExistence type="inferred from homology"/>
<name>BAMC_THIDA</name>
<organism>
    <name type="scientific">Thiobacillus denitrificans (strain ATCC 25259 / T1)</name>
    <dbReference type="NCBI Taxonomy" id="292415"/>
    <lineage>
        <taxon>Bacteria</taxon>
        <taxon>Pseudomonadati</taxon>
        <taxon>Pseudomonadota</taxon>
        <taxon>Betaproteobacteria</taxon>
        <taxon>Nitrosomonadales</taxon>
        <taxon>Thiobacillaceae</taxon>
        <taxon>Thiobacillus</taxon>
    </lineage>
</organism>
<accession>Q3SJU7</accession>
<reference key="1">
    <citation type="journal article" date="2006" name="J. Bacteriol.">
        <title>The genome sequence of the obligately chemolithoautotrophic, facultatively anaerobic bacterium Thiobacillus denitrificans.</title>
        <authorList>
            <person name="Beller H.R."/>
            <person name="Chain P.S."/>
            <person name="Letain T.E."/>
            <person name="Chakicherla A."/>
            <person name="Larimer F.W."/>
            <person name="Richardson P.M."/>
            <person name="Coleman M.A."/>
            <person name="Wood A.P."/>
            <person name="Kelly D.P."/>
        </authorList>
    </citation>
    <scope>NUCLEOTIDE SEQUENCE [LARGE SCALE GENOMIC DNA]</scope>
    <source>
        <strain>ATCC 25259 / T1</strain>
    </source>
</reference>
<evidence type="ECO:0000255" key="1">
    <source>
        <dbReference type="HAMAP-Rule" id="MF_00924"/>
    </source>
</evidence>
<comment type="function">
    <text evidence="1">Part of the outer membrane protein assembly complex, which is involved in assembly and insertion of beta-barrel proteins into the outer membrane.</text>
</comment>
<comment type="subunit">
    <text evidence="1">Part of the Bam complex.</text>
</comment>
<comment type="subcellular location">
    <subcellularLocation>
        <location evidence="1">Cell outer membrane</location>
        <topology evidence="1">Lipid-anchor</topology>
    </subcellularLocation>
</comment>
<comment type="similarity">
    <text evidence="1">Belongs to the BamC family.</text>
</comment>
<gene>
    <name evidence="1" type="primary">bamC</name>
    <name type="ordered locus">Tbd_1099</name>
</gene>
<dbReference type="EMBL" id="CP000116">
    <property type="protein sequence ID" value="AAZ97052.1"/>
    <property type="molecule type" value="Genomic_DNA"/>
</dbReference>
<dbReference type="RefSeq" id="WP_011311611.1">
    <property type="nucleotide sequence ID" value="NC_007404.1"/>
</dbReference>
<dbReference type="STRING" id="292415.Tbd_1099"/>
<dbReference type="KEGG" id="tbd:Tbd_1099"/>
<dbReference type="eggNOG" id="COG3317">
    <property type="taxonomic scope" value="Bacteria"/>
</dbReference>
<dbReference type="HOGENOM" id="CLU_056157_0_0_4"/>
<dbReference type="OrthoDB" id="5291099at2"/>
<dbReference type="Proteomes" id="UP000008291">
    <property type="component" value="Chromosome"/>
</dbReference>
<dbReference type="GO" id="GO:0009279">
    <property type="term" value="C:cell outer membrane"/>
    <property type="evidence" value="ECO:0007669"/>
    <property type="project" value="UniProtKB-SubCell"/>
</dbReference>
<dbReference type="GO" id="GO:0043165">
    <property type="term" value="P:Gram-negative-bacterium-type cell outer membrane assembly"/>
    <property type="evidence" value="ECO:0007669"/>
    <property type="project" value="UniProtKB-UniRule"/>
</dbReference>
<dbReference type="GO" id="GO:0051205">
    <property type="term" value="P:protein insertion into membrane"/>
    <property type="evidence" value="ECO:0007669"/>
    <property type="project" value="UniProtKB-UniRule"/>
</dbReference>
<dbReference type="Gene3D" id="3.30.310.170">
    <property type="entry name" value="Outer membrane protein assembly factor BamC"/>
    <property type="match status" value="1"/>
</dbReference>
<dbReference type="HAMAP" id="MF_00924">
    <property type="entry name" value="OM_assembly_BamC"/>
    <property type="match status" value="1"/>
</dbReference>
<dbReference type="InterPro" id="IPR014524">
    <property type="entry name" value="BamC"/>
</dbReference>
<dbReference type="InterPro" id="IPR042268">
    <property type="entry name" value="BamC_C"/>
</dbReference>
<dbReference type="InterPro" id="IPR010653">
    <property type="entry name" value="NlpB/DapX"/>
</dbReference>
<dbReference type="Pfam" id="PF06804">
    <property type="entry name" value="Lipoprotein_18"/>
    <property type="match status" value="1"/>
</dbReference>
<dbReference type="PROSITE" id="PS51257">
    <property type="entry name" value="PROKAR_LIPOPROTEIN"/>
    <property type="match status" value="1"/>
</dbReference>
<protein>
    <recommendedName>
        <fullName evidence="1">Outer membrane protein assembly factor BamC</fullName>
    </recommendedName>
</protein>
<feature type="signal peptide" evidence="1">
    <location>
        <begin position="1"/>
        <end position="16"/>
    </location>
</feature>
<feature type="chain" id="PRO_5000103366" description="Outer membrane protein assembly factor BamC">
    <location>
        <begin position="17"/>
        <end position="367"/>
    </location>
</feature>
<feature type="lipid moiety-binding region" description="N-palmitoyl cysteine" evidence="1">
    <location>
        <position position="17"/>
    </location>
</feature>
<feature type="lipid moiety-binding region" description="S-diacylglycerol cysteine" evidence="1">
    <location>
        <position position="17"/>
    </location>
</feature>